<protein>
    <recommendedName>
        <fullName evidence="1">Co-chaperone protein HscB homolog</fullName>
    </recommendedName>
</protein>
<name>HSCB_SHESW</name>
<accession>A1RJ55</accession>
<dbReference type="EMBL" id="CP000503">
    <property type="protein sequence ID" value="ABM24700.1"/>
    <property type="molecule type" value="Genomic_DNA"/>
</dbReference>
<dbReference type="RefSeq" id="WP_011789192.1">
    <property type="nucleotide sequence ID" value="NC_008750.1"/>
</dbReference>
<dbReference type="SMR" id="A1RJ55"/>
<dbReference type="KEGG" id="shw:Sputw3181_1865"/>
<dbReference type="HOGENOM" id="CLU_068529_2_0_6"/>
<dbReference type="Proteomes" id="UP000002597">
    <property type="component" value="Chromosome"/>
</dbReference>
<dbReference type="GO" id="GO:1990230">
    <property type="term" value="C:iron-sulfur cluster transfer complex"/>
    <property type="evidence" value="ECO:0007669"/>
    <property type="project" value="TreeGrafter"/>
</dbReference>
<dbReference type="GO" id="GO:0001671">
    <property type="term" value="F:ATPase activator activity"/>
    <property type="evidence" value="ECO:0007669"/>
    <property type="project" value="InterPro"/>
</dbReference>
<dbReference type="GO" id="GO:0051087">
    <property type="term" value="F:protein-folding chaperone binding"/>
    <property type="evidence" value="ECO:0007669"/>
    <property type="project" value="InterPro"/>
</dbReference>
<dbReference type="GO" id="GO:0044571">
    <property type="term" value="P:[2Fe-2S] cluster assembly"/>
    <property type="evidence" value="ECO:0007669"/>
    <property type="project" value="InterPro"/>
</dbReference>
<dbReference type="GO" id="GO:0051259">
    <property type="term" value="P:protein complex oligomerization"/>
    <property type="evidence" value="ECO:0007669"/>
    <property type="project" value="InterPro"/>
</dbReference>
<dbReference type="GO" id="GO:0006457">
    <property type="term" value="P:protein folding"/>
    <property type="evidence" value="ECO:0007669"/>
    <property type="project" value="UniProtKB-UniRule"/>
</dbReference>
<dbReference type="CDD" id="cd06257">
    <property type="entry name" value="DnaJ"/>
    <property type="match status" value="1"/>
</dbReference>
<dbReference type="Gene3D" id="1.10.287.110">
    <property type="entry name" value="DnaJ domain"/>
    <property type="match status" value="1"/>
</dbReference>
<dbReference type="Gene3D" id="1.20.1280.20">
    <property type="entry name" value="HscB, C-terminal domain"/>
    <property type="match status" value="1"/>
</dbReference>
<dbReference type="HAMAP" id="MF_00682">
    <property type="entry name" value="HscB"/>
    <property type="match status" value="1"/>
</dbReference>
<dbReference type="InterPro" id="IPR001623">
    <property type="entry name" value="DnaJ_domain"/>
</dbReference>
<dbReference type="InterPro" id="IPR004640">
    <property type="entry name" value="HscB"/>
</dbReference>
<dbReference type="InterPro" id="IPR036386">
    <property type="entry name" value="HscB_C_sf"/>
</dbReference>
<dbReference type="InterPro" id="IPR009073">
    <property type="entry name" value="HscB_oligo_C"/>
</dbReference>
<dbReference type="InterPro" id="IPR036869">
    <property type="entry name" value="J_dom_sf"/>
</dbReference>
<dbReference type="NCBIfam" id="TIGR00714">
    <property type="entry name" value="hscB"/>
    <property type="match status" value="1"/>
</dbReference>
<dbReference type="NCBIfam" id="NF003449">
    <property type="entry name" value="PRK05014.1"/>
    <property type="match status" value="1"/>
</dbReference>
<dbReference type="PANTHER" id="PTHR14021">
    <property type="entry name" value="IRON-SULFUR CLUSTER CO-CHAPERONE PROTEIN HSCB"/>
    <property type="match status" value="1"/>
</dbReference>
<dbReference type="PANTHER" id="PTHR14021:SF15">
    <property type="entry name" value="IRON-SULFUR CLUSTER CO-CHAPERONE PROTEIN HSCB"/>
    <property type="match status" value="1"/>
</dbReference>
<dbReference type="Pfam" id="PF07743">
    <property type="entry name" value="HSCB_C"/>
    <property type="match status" value="1"/>
</dbReference>
<dbReference type="SMART" id="SM00271">
    <property type="entry name" value="DnaJ"/>
    <property type="match status" value="1"/>
</dbReference>
<dbReference type="SUPFAM" id="SSF46565">
    <property type="entry name" value="Chaperone J-domain"/>
    <property type="match status" value="1"/>
</dbReference>
<dbReference type="SUPFAM" id="SSF47144">
    <property type="entry name" value="HSC20 (HSCB), C-terminal oligomerisation domain"/>
    <property type="match status" value="1"/>
</dbReference>
<dbReference type="PROSITE" id="PS50076">
    <property type="entry name" value="DNAJ_2"/>
    <property type="match status" value="1"/>
</dbReference>
<keyword id="KW-0143">Chaperone</keyword>
<gene>
    <name evidence="1" type="primary">hscB</name>
    <name type="ordered locus">Sputw3181_1865</name>
</gene>
<proteinExistence type="inferred from homology"/>
<feature type="chain" id="PRO_1000083046" description="Co-chaperone protein HscB homolog">
    <location>
        <begin position="1"/>
        <end position="174"/>
    </location>
</feature>
<feature type="domain" description="J" evidence="1">
    <location>
        <begin position="2"/>
        <end position="74"/>
    </location>
</feature>
<sequence length="174" mass="20381">MNYFELFKFSPAFDIDTAVLAERYRELQRAVHPDKFAHDTEQQKLLSVQRTAQVNDGYQTLKDPIRRAEHLLSLRGIDLSHETTTVKDTVFLMQQMEWREALEDIRHSTDPQESIDELYQSFAEYRAKLTYMLTAQLNSSKDEDALLAADQVRKLKFMAKLHDELTRIEDALLD</sequence>
<organism>
    <name type="scientific">Shewanella sp. (strain W3-18-1)</name>
    <dbReference type="NCBI Taxonomy" id="351745"/>
    <lineage>
        <taxon>Bacteria</taxon>
        <taxon>Pseudomonadati</taxon>
        <taxon>Pseudomonadota</taxon>
        <taxon>Gammaproteobacteria</taxon>
        <taxon>Alteromonadales</taxon>
        <taxon>Shewanellaceae</taxon>
        <taxon>Shewanella</taxon>
    </lineage>
</organism>
<evidence type="ECO:0000255" key="1">
    <source>
        <dbReference type="HAMAP-Rule" id="MF_00682"/>
    </source>
</evidence>
<comment type="function">
    <text evidence="1">Co-chaperone involved in the maturation of iron-sulfur cluster-containing proteins. Seems to help targeting proteins to be folded toward HscA.</text>
</comment>
<comment type="subunit">
    <text evidence="1">Interacts with HscA and stimulates its ATPase activity.</text>
</comment>
<comment type="similarity">
    <text evidence="1">Belongs to the HscB family.</text>
</comment>
<reference key="1">
    <citation type="submission" date="2006-12" db="EMBL/GenBank/DDBJ databases">
        <title>Complete sequence of Shewanella sp. W3-18-1.</title>
        <authorList>
            <consortium name="US DOE Joint Genome Institute"/>
            <person name="Copeland A."/>
            <person name="Lucas S."/>
            <person name="Lapidus A."/>
            <person name="Barry K."/>
            <person name="Detter J.C."/>
            <person name="Glavina del Rio T."/>
            <person name="Hammon N."/>
            <person name="Israni S."/>
            <person name="Dalin E."/>
            <person name="Tice H."/>
            <person name="Pitluck S."/>
            <person name="Chain P."/>
            <person name="Malfatti S."/>
            <person name="Shin M."/>
            <person name="Vergez L."/>
            <person name="Schmutz J."/>
            <person name="Larimer F."/>
            <person name="Land M."/>
            <person name="Hauser L."/>
            <person name="Kyrpides N."/>
            <person name="Lykidis A."/>
            <person name="Tiedje J."/>
            <person name="Richardson P."/>
        </authorList>
    </citation>
    <scope>NUCLEOTIDE SEQUENCE [LARGE SCALE GENOMIC DNA]</scope>
    <source>
        <strain>W3-18-1</strain>
    </source>
</reference>